<keyword id="KW-1185">Reference proteome</keyword>
<feature type="chain" id="PRO_0000077610" description="P21 prophage-derived protein NinB">
    <location>
        <begin position="1"/>
        <end position="146"/>
    </location>
</feature>
<accession>P68651</accession>
<accession>Q9XJQ1</accession>
<dbReference type="EMBL" id="AE014075">
    <property type="protein sequence ID" value="AAN80023.1"/>
    <property type="molecule type" value="Genomic_DNA"/>
</dbReference>
<dbReference type="RefSeq" id="WP_000736913.1">
    <property type="nucleotide sequence ID" value="NZ_CP051263.1"/>
</dbReference>
<dbReference type="SMR" id="P68651"/>
<dbReference type="STRING" id="199310.c1554"/>
<dbReference type="KEGG" id="ecc:c1554"/>
<dbReference type="eggNOG" id="ENOG5032YYI">
    <property type="taxonomic scope" value="Bacteria"/>
</dbReference>
<dbReference type="HOGENOM" id="CLU_127009_0_0_6"/>
<dbReference type="BioCyc" id="ECOL199310:C1554-MONOMER"/>
<dbReference type="Proteomes" id="UP000001410">
    <property type="component" value="Chromosome"/>
</dbReference>
<dbReference type="Gene3D" id="1.10.3790.10">
    <property type="entry name" value="NinB"/>
    <property type="match status" value="1"/>
</dbReference>
<dbReference type="InterPro" id="IPR036619">
    <property type="entry name" value="NinB_sf"/>
</dbReference>
<dbReference type="InterPro" id="IPR008711">
    <property type="entry name" value="Recombinase_NinB"/>
</dbReference>
<dbReference type="Pfam" id="PF05772">
    <property type="entry name" value="NinB"/>
    <property type="match status" value="1"/>
</dbReference>
<dbReference type="SUPFAM" id="SSF103370">
    <property type="entry name" value="NinB"/>
    <property type="match status" value="1"/>
</dbReference>
<gene>
    <name type="primary">ninB</name>
    <name type="ordered locus">c1554</name>
</gene>
<comment type="similarity">
    <text evidence="1">Belongs to the ninB family.</text>
</comment>
<name>NINB_ECOL6</name>
<proteinExistence type="inferred from homology"/>
<protein>
    <recommendedName>
        <fullName>P21 prophage-derived protein NinB</fullName>
    </recommendedName>
</protein>
<organism>
    <name type="scientific">Escherichia coli O6:H1 (strain CFT073 / ATCC 700928 / UPEC)</name>
    <dbReference type="NCBI Taxonomy" id="199310"/>
    <lineage>
        <taxon>Bacteria</taxon>
        <taxon>Pseudomonadati</taxon>
        <taxon>Pseudomonadota</taxon>
        <taxon>Gammaproteobacteria</taxon>
        <taxon>Enterobacterales</taxon>
        <taxon>Enterobacteriaceae</taxon>
        <taxon>Escherichia</taxon>
    </lineage>
</organism>
<evidence type="ECO:0000305" key="1"/>
<sequence length="146" mass="16678">MKKLTFEIRSPAHQQNAIHAVQQILPDPTKPIVVTIQERNRSLDQNRKLWACLGDVSRQVEWHGRWLDAESWKCVFTAALKQQDVVPNLAGNGFVVIGQSTSRMRVSEFAELLELIQAFGTERGVKWSDEARLALEWKARWGDRAA</sequence>
<reference key="1">
    <citation type="journal article" date="2002" name="Proc. Natl. Acad. Sci. U.S.A.">
        <title>Extensive mosaic structure revealed by the complete genome sequence of uropathogenic Escherichia coli.</title>
        <authorList>
            <person name="Welch R.A."/>
            <person name="Burland V."/>
            <person name="Plunkett G. III"/>
            <person name="Redford P."/>
            <person name="Roesch P."/>
            <person name="Rasko D."/>
            <person name="Buckles E.L."/>
            <person name="Liou S.-R."/>
            <person name="Boutin A."/>
            <person name="Hackett J."/>
            <person name="Stroud D."/>
            <person name="Mayhew G.F."/>
            <person name="Rose D.J."/>
            <person name="Zhou S."/>
            <person name="Schwartz D.C."/>
            <person name="Perna N.T."/>
            <person name="Mobley H.L.T."/>
            <person name="Donnenberg M.S."/>
            <person name="Blattner F.R."/>
        </authorList>
    </citation>
    <scope>NUCLEOTIDE SEQUENCE [LARGE SCALE GENOMIC DNA]</scope>
    <source>
        <strain>CFT073 / ATCC 700928 / UPEC</strain>
    </source>
</reference>